<reference key="1">
    <citation type="submission" date="2008-05" db="EMBL/GenBank/DDBJ databases">
        <title>Complete sequence of Chlorobium limicola DSM 245.</title>
        <authorList>
            <consortium name="US DOE Joint Genome Institute"/>
            <person name="Lucas S."/>
            <person name="Copeland A."/>
            <person name="Lapidus A."/>
            <person name="Glavina del Rio T."/>
            <person name="Dalin E."/>
            <person name="Tice H."/>
            <person name="Bruce D."/>
            <person name="Goodwin L."/>
            <person name="Pitluck S."/>
            <person name="Schmutz J."/>
            <person name="Larimer F."/>
            <person name="Land M."/>
            <person name="Hauser L."/>
            <person name="Kyrpides N."/>
            <person name="Ovchinnikova G."/>
            <person name="Zhao F."/>
            <person name="Li T."/>
            <person name="Liu Z."/>
            <person name="Overmann J."/>
            <person name="Bryant D.A."/>
            <person name="Richardson P."/>
        </authorList>
    </citation>
    <scope>NUCLEOTIDE SEQUENCE [LARGE SCALE GENOMIC DNA]</scope>
    <source>
        <strain>DSM 245 / NBRC 103803 / 6330</strain>
    </source>
</reference>
<comment type="function">
    <text evidence="1">Catalyzes the ATP-dependent conversion of 7-carboxy-7-deazaguanine (CDG) to 7-cyano-7-deazaguanine (preQ(0)).</text>
</comment>
<comment type="catalytic activity">
    <reaction evidence="1">
        <text>7-carboxy-7-deazaguanine + NH4(+) + ATP = 7-cyano-7-deazaguanine + ADP + phosphate + H2O + H(+)</text>
        <dbReference type="Rhea" id="RHEA:27982"/>
        <dbReference type="ChEBI" id="CHEBI:15377"/>
        <dbReference type="ChEBI" id="CHEBI:15378"/>
        <dbReference type="ChEBI" id="CHEBI:28938"/>
        <dbReference type="ChEBI" id="CHEBI:30616"/>
        <dbReference type="ChEBI" id="CHEBI:43474"/>
        <dbReference type="ChEBI" id="CHEBI:45075"/>
        <dbReference type="ChEBI" id="CHEBI:61036"/>
        <dbReference type="ChEBI" id="CHEBI:456216"/>
        <dbReference type="EC" id="6.3.4.20"/>
    </reaction>
</comment>
<comment type="cofactor">
    <cofactor evidence="1">
        <name>Zn(2+)</name>
        <dbReference type="ChEBI" id="CHEBI:29105"/>
    </cofactor>
    <text evidence="1">Binds 1 zinc ion per subunit.</text>
</comment>
<comment type="pathway">
    <text evidence="1">Purine metabolism; 7-cyano-7-deazaguanine biosynthesis.</text>
</comment>
<comment type="similarity">
    <text evidence="1">Belongs to the QueC family.</text>
</comment>
<gene>
    <name evidence="1" type="primary">queC</name>
    <name type="ordered locus">Clim_0499</name>
</gene>
<proteinExistence type="inferred from homology"/>
<organism>
    <name type="scientific">Chlorobium limicola (strain DSM 245 / NBRC 103803 / 6330)</name>
    <dbReference type="NCBI Taxonomy" id="290315"/>
    <lineage>
        <taxon>Bacteria</taxon>
        <taxon>Pseudomonadati</taxon>
        <taxon>Chlorobiota</taxon>
        <taxon>Chlorobiia</taxon>
        <taxon>Chlorobiales</taxon>
        <taxon>Chlorobiaceae</taxon>
        <taxon>Chlorobium/Pelodictyon group</taxon>
        <taxon>Chlorobium</taxon>
    </lineage>
</organism>
<dbReference type="EC" id="6.3.4.20" evidence="1"/>
<dbReference type="EMBL" id="CP001097">
    <property type="protein sequence ID" value="ACD89592.1"/>
    <property type="molecule type" value="Genomic_DNA"/>
</dbReference>
<dbReference type="RefSeq" id="WP_012465473.1">
    <property type="nucleotide sequence ID" value="NC_010803.1"/>
</dbReference>
<dbReference type="SMR" id="B3EGF5"/>
<dbReference type="STRING" id="290315.Clim_0499"/>
<dbReference type="KEGG" id="cli:Clim_0499"/>
<dbReference type="eggNOG" id="COG0603">
    <property type="taxonomic scope" value="Bacteria"/>
</dbReference>
<dbReference type="HOGENOM" id="CLU_081854_1_0_10"/>
<dbReference type="OrthoDB" id="9789567at2"/>
<dbReference type="UniPathway" id="UPA00391"/>
<dbReference type="Proteomes" id="UP000008841">
    <property type="component" value="Chromosome"/>
</dbReference>
<dbReference type="GO" id="GO:0005524">
    <property type="term" value="F:ATP binding"/>
    <property type="evidence" value="ECO:0007669"/>
    <property type="project" value="UniProtKB-UniRule"/>
</dbReference>
<dbReference type="GO" id="GO:0016879">
    <property type="term" value="F:ligase activity, forming carbon-nitrogen bonds"/>
    <property type="evidence" value="ECO:0007669"/>
    <property type="project" value="UniProtKB-UniRule"/>
</dbReference>
<dbReference type="GO" id="GO:0008270">
    <property type="term" value="F:zinc ion binding"/>
    <property type="evidence" value="ECO:0007669"/>
    <property type="project" value="UniProtKB-UniRule"/>
</dbReference>
<dbReference type="GO" id="GO:0008616">
    <property type="term" value="P:queuosine biosynthetic process"/>
    <property type="evidence" value="ECO:0007669"/>
    <property type="project" value="UniProtKB-UniRule"/>
</dbReference>
<dbReference type="CDD" id="cd01995">
    <property type="entry name" value="QueC-like"/>
    <property type="match status" value="1"/>
</dbReference>
<dbReference type="Gene3D" id="3.40.50.620">
    <property type="entry name" value="HUPs"/>
    <property type="match status" value="1"/>
</dbReference>
<dbReference type="HAMAP" id="MF_01633">
    <property type="entry name" value="QueC"/>
    <property type="match status" value="1"/>
</dbReference>
<dbReference type="InterPro" id="IPR018317">
    <property type="entry name" value="QueC"/>
</dbReference>
<dbReference type="InterPro" id="IPR014729">
    <property type="entry name" value="Rossmann-like_a/b/a_fold"/>
</dbReference>
<dbReference type="NCBIfam" id="TIGR00364">
    <property type="entry name" value="7-cyano-7-deazaguanine synthase QueC"/>
    <property type="match status" value="1"/>
</dbReference>
<dbReference type="PANTHER" id="PTHR42914">
    <property type="entry name" value="7-CYANO-7-DEAZAGUANINE SYNTHASE"/>
    <property type="match status" value="1"/>
</dbReference>
<dbReference type="PANTHER" id="PTHR42914:SF1">
    <property type="entry name" value="7-CYANO-7-DEAZAGUANINE SYNTHASE"/>
    <property type="match status" value="1"/>
</dbReference>
<dbReference type="Pfam" id="PF06508">
    <property type="entry name" value="QueC"/>
    <property type="match status" value="1"/>
</dbReference>
<dbReference type="PIRSF" id="PIRSF006293">
    <property type="entry name" value="ExsB"/>
    <property type="match status" value="1"/>
</dbReference>
<dbReference type="SUPFAM" id="SSF52402">
    <property type="entry name" value="Adenine nucleotide alpha hydrolases-like"/>
    <property type="match status" value="1"/>
</dbReference>
<name>QUEC_CHLL2</name>
<evidence type="ECO:0000255" key="1">
    <source>
        <dbReference type="HAMAP-Rule" id="MF_01633"/>
    </source>
</evidence>
<sequence>MKAVLLISGGMDSLVTTAIAAEEKLELAAMHVNYGQRTWQKELECFRRICNHYQIRHRLEIEAGYLAQTGGSSLTDPAMPVSGADLQGTDIPTSYVPFRNAGFLSMAVSWSEVIGAGKIFIGAVEEDSSGYPDCRQVFYDAFNRVIELGTRPDTAIEIVTPLISMQKCDIVLKGMELNAPFACSWSCYKSEGRACGVCDSCARRLRAFELTGVRDPIEYEVRPKYI</sequence>
<keyword id="KW-0067">ATP-binding</keyword>
<keyword id="KW-0436">Ligase</keyword>
<keyword id="KW-0479">Metal-binding</keyword>
<keyword id="KW-0547">Nucleotide-binding</keyword>
<keyword id="KW-0671">Queuosine biosynthesis</keyword>
<keyword id="KW-0862">Zinc</keyword>
<accession>B3EGF5</accession>
<feature type="chain" id="PRO_1000186572" description="7-cyano-7-deazaguanine synthase">
    <location>
        <begin position="1"/>
        <end position="226"/>
    </location>
</feature>
<feature type="binding site" evidence="1">
    <location>
        <begin position="7"/>
        <end position="17"/>
    </location>
    <ligand>
        <name>ATP</name>
        <dbReference type="ChEBI" id="CHEBI:30616"/>
    </ligand>
</feature>
<feature type="binding site" evidence="1">
    <location>
        <position position="187"/>
    </location>
    <ligand>
        <name>Zn(2+)</name>
        <dbReference type="ChEBI" id="CHEBI:29105"/>
    </ligand>
</feature>
<feature type="binding site" evidence="1">
    <location>
        <position position="195"/>
    </location>
    <ligand>
        <name>Zn(2+)</name>
        <dbReference type="ChEBI" id="CHEBI:29105"/>
    </ligand>
</feature>
<feature type="binding site" evidence="1">
    <location>
        <position position="198"/>
    </location>
    <ligand>
        <name>Zn(2+)</name>
        <dbReference type="ChEBI" id="CHEBI:29105"/>
    </ligand>
</feature>
<feature type="binding site" evidence="1">
    <location>
        <position position="201"/>
    </location>
    <ligand>
        <name>Zn(2+)</name>
        <dbReference type="ChEBI" id="CHEBI:29105"/>
    </ligand>
</feature>
<protein>
    <recommendedName>
        <fullName evidence="1">7-cyano-7-deazaguanine synthase</fullName>
        <ecNumber evidence="1">6.3.4.20</ecNumber>
    </recommendedName>
    <alternativeName>
        <fullName evidence="1">7-cyano-7-carbaguanine synthase</fullName>
    </alternativeName>
    <alternativeName>
        <fullName evidence="1">PreQ(0) synthase</fullName>
    </alternativeName>
    <alternativeName>
        <fullName evidence="1">Queuosine biosynthesis protein QueC</fullName>
    </alternativeName>
</protein>